<keyword id="KW-0938">Abscisic acid signaling pathway</keyword>
<keyword id="KW-1003">Cell membrane</keyword>
<keyword id="KW-0963">Cytoplasm</keyword>
<keyword id="KW-1015">Disulfide bond</keyword>
<keyword id="KW-0472">Membrane</keyword>
<keyword id="KW-0539">Nucleus</keyword>
<keyword id="KW-0650">Protein phosphatase inhibitor</keyword>
<keyword id="KW-0675">Receptor</keyword>
<keyword id="KW-1185">Reference proteome</keyword>
<accession>Q1ECF1</accession>
<accession>Q8LAZ6</accession>
<accession>Q9SV27</accession>
<sequence>MEMIGGDDTDTEMYGALVTAQSLRLRHLHHCRENQCTSVLVKYIQAPVHLVWSLVRRFDQPQKYKPFISRCTVNGDPEIGCLREVNVKSGLPATTSTERLEQLDDEEHILGINIIGGDHRLKNYSSILTVHPEMIDGRSGTMVMESFVVDVPQGNTKDDTCYFVESLIKCNLKSLACVSERLAAQDITNSIATFCNASNGYREKNHTETNL</sequence>
<proteinExistence type="evidence at protein level"/>
<protein>
    <recommendedName>
        <fullName>Abscisic acid receptor PYL7</fullName>
    </recommendedName>
    <alternativeName>
        <fullName>ABI1-binding protein 7</fullName>
    </alternativeName>
    <alternativeName>
        <fullName>PYR1-like protein 7</fullName>
    </alternativeName>
    <alternativeName>
        <fullName>Regulatory components of ABA receptor 2</fullName>
    </alternativeName>
</protein>
<comment type="function">
    <text evidence="1">Receptor for abscisic acid (ABA) required for ABA-mediated responses such as stomatal closure and germination inhibition. Inhibits the activity of group-A protein phosphatases type 2C (PP2Cs) when activated by ABA.</text>
</comment>
<comment type="subunit">
    <text evidence="1 6">Homodimer. Binds ABA on one subunit only. Binds to CARs protein in an ABA-independent manner, both at the plasma membrane and in the nucleus (By similarity). Interacts with ABI1, and possibly with other PP2Cs (PubMed:19874541).</text>
</comment>
<comment type="interaction">
    <interactant intactId="EBI-2363203">
        <id>Q1ECF1</id>
    </interactant>
    <interactant intactId="EBI-782526">
        <id>P49597</id>
        <label>ABI1</label>
    </interactant>
    <organismsDiffer>false</organismsDiffer>
    <experiments>5</experiments>
</comment>
<comment type="interaction">
    <interactant intactId="EBI-2363203">
        <id>Q1ECF1</id>
    </interactant>
    <interactant intactId="EBI-1573499">
        <id>Q9LNW3</id>
        <label>AIP1</label>
    </interactant>
    <organismsDiffer>false</organismsDiffer>
    <experiments>7</experiments>
</comment>
<comment type="interaction">
    <interactant intactId="EBI-2363203">
        <id>Q1ECF1</id>
    </interactant>
    <interactant intactId="EBI-25528474">
        <id>A0A1P8AVS2</id>
        <label>At1g72340</label>
    </interactant>
    <organismsDiffer>false</organismsDiffer>
    <experiments>3</experiments>
</comment>
<comment type="interaction">
    <interactant intactId="EBI-2363203">
        <id>Q1ECF1</id>
    </interactant>
    <interactant intactId="EBI-4441103">
        <id>Q9ZW21</id>
        <label>At2g29380</label>
    </interactant>
    <organismsDiffer>false</organismsDiffer>
    <experiments>5</experiments>
</comment>
<comment type="interaction">
    <interactant intactId="EBI-2363203">
        <id>Q1ECF1</id>
    </interactant>
    <interactant intactId="EBI-2309302">
        <id>Q9CAJ0</id>
        <label>HAB1</label>
    </interactant>
    <organismsDiffer>false</organismsDiffer>
    <experiments>4</experiments>
</comment>
<comment type="interaction">
    <interactant intactId="EBI-2363203">
        <id>Q1ECF1</id>
    </interactant>
    <interactant intactId="EBI-15803614">
        <id>Q9LNP9</id>
        <label>HAB2</label>
    </interactant>
    <organismsDiffer>false</organismsDiffer>
    <experiments>3</experiments>
</comment>
<comment type="interaction">
    <interactant intactId="EBI-2363203">
        <id>Q1ECF1</id>
    </interactant>
    <interactant intactId="EBI-2319707">
        <id>Q94F58</id>
        <label>NAC089</label>
    </interactant>
    <organismsDiffer>false</organismsDiffer>
    <experiments>3</experiments>
</comment>
<comment type="interaction">
    <interactant intactId="EBI-2363203">
        <id>Q1ECF1</id>
    </interactant>
    <interactant intactId="EBI-4426178">
        <id>Q9LT89</id>
        <label>TCP19</label>
    </interactant>
    <organismsDiffer>false</organismsDiffer>
    <experiments>3</experiments>
</comment>
<comment type="subcellular location">
    <subcellularLocation>
        <location evidence="5">Cytoplasm</location>
    </subcellularLocation>
    <subcellularLocation>
        <location evidence="1">Nucleus</location>
    </subcellularLocation>
    <subcellularLocation>
        <location evidence="1">Cell membrane</location>
    </subcellularLocation>
    <text evidence="2">Localizes at the plasma membrane in the presence of a CAR protein.</text>
</comment>
<comment type="domain">
    <text evidence="4">Upon interaction with ABA, the 'latch' and 'gate' loops change in conformation leading to a tight dimerization and the creation a surface that enables the receptor to dock into and inhibit the PP2C active site.</text>
</comment>
<comment type="similarity">
    <text evidence="7">Belongs to the PYR/PYL/RCAR abscisic acid intracellular receptor family.</text>
</comment>
<comment type="sequence caution" evidence="7">
    <conflict type="erroneous initiation">
        <sequence resource="EMBL-CDS" id="AAM65054"/>
    </conflict>
    <text>Truncated N-terminus.</text>
</comment>
<comment type="sequence caution" evidence="7">
    <conflict type="erroneous gene model prediction">
        <sequence resource="EMBL-CDS" id="CAB45785"/>
    </conflict>
    <text>The predicted gene At4g01020 has been split into 2 genes: At4g01020 and At4g01026.</text>
</comment>
<comment type="sequence caution" evidence="7">
    <conflict type="erroneous gene model prediction">
        <sequence resource="EMBL-CDS" id="CAB80911"/>
    </conflict>
    <text>The predicted gene At4g01020 has been split into 2 genes: At4g01020 and At4g01026.</text>
</comment>
<name>PYL7_ARATH</name>
<gene>
    <name type="primary">PYL7</name>
    <name type="synonym">ABIP7</name>
    <name type="synonym">RCAR2</name>
    <name type="ordered locus">At4g01026</name>
    <name type="ORF">F3I3</name>
</gene>
<feature type="chain" id="PRO_0000391742" description="Abscisic acid receptor PYL7">
    <location>
        <begin position="1"/>
        <end position="211"/>
    </location>
</feature>
<feature type="region of interest" description="START-like">
    <location>
        <begin position="29"/>
        <end position="180"/>
    </location>
</feature>
<feature type="short sequence motif" description="Gate loop" evidence="4">
    <location>
        <begin position="89"/>
        <end position="93"/>
    </location>
</feature>
<feature type="short sequence motif" description="Latch loop" evidence="4">
    <location>
        <begin position="119"/>
        <end position="121"/>
    </location>
</feature>
<feature type="binding site" evidence="1">
    <location>
        <position position="65"/>
    </location>
    <ligand>
        <name>abscisate</name>
        <dbReference type="ChEBI" id="CHEBI:62432"/>
    </ligand>
</feature>
<feature type="binding site" evidence="1">
    <location>
        <begin position="93"/>
        <end position="98"/>
    </location>
    <ligand>
        <name>abscisate</name>
        <dbReference type="ChEBI" id="CHEBI:62432"/>
    </ligand>
</feature>
<feature type="binding site" evidence="1">
    <location>
        <begin position="120"/>
        <end position="126"/>
    </location>
    <ligand>
        <name>abscisate</name>
        <dbReference type="ChEBI" id="CHEBI:62432"/>
    </ligand>
</feature>
<feature type="binding site" evidence="1">
    <location>
        <position position="145"/>
    </location>
    <ligand>
        <name>abscisate</name>
        <dbReference type="ChEBI" id="CHEBI:62432"/>
    </ligand>
</feature>
<feature type="site" description="Involved in ABA binding" evidence="3">
    <location>
        <position position="66"/>
    </location>
</feature>
<feature type="site" description="Involved in interactions with PP2Cs" evidence="1">
    <location>
        <position position="92"/>
    </location>
</feature>
<feature type="site" description="Involved in ABA binding" evidence="3">
    <location>
        <position position="112"/>
    </location>
</feature>
<feature type="site" description="Involved in interactions with PP2Cs" evidence="1">
    <location>
        <position position="156"/>
    </location>
</feature>
<feature type="site" description="Involved in ABA binding" evidence="3">
    <location>
        <position position="164"/>
    </location>
</feature>
<feature type="site" description="Involved in ABA binding" evidence="3">
    <location>
        <position position="167"/>
    </location>
</feature>
<feature type="disulfide bond" description="Reversible" evidence="3">
    <location>
        <begin position="31"/>
        <end position="161"/>
    </location>
</feature>
<feature type="disulfide bond" description="Reversible" evidence="3">
    <location>
        <begin position="36"/>
        <end position="161"/>
    </location>
</feature>
<organism>
    <name type="scientific">Arabidopsis thaliana</name>
    <name type="common">Mouse-ear cress</name>
    <dbReference type="NCBI Taxonomy" id="3702"/>
    <lineage>
        <taxon>Eukaryota</taxon>
        <taxon>Viridiplantae</taxon>
        <taxon>Streptophyta</taxon>
        <taxon>Embryophyta</taxon>
        <taxon>Tracheophyta</taxon>
        <taxon>Spermatophyta</taxon>
        <taxon>Magnoliopsida</taxon>
        <taxon>eudicotyledons</taxon>
        <taxon>Gunneridae</taxon>
        <taxon>Pentapetalae</taxon>
        <taxon>rosids</taxon>
        <taxon>malvids</taxon>
        <taxon>Brassicales</taxon>
        <taxon>Brassicaceae</taxon>
        <taxon>Camelineae</taxon>
        <taxon>Arabidopsis</taxon>
    </lineage>
</organism>
<reference key="1">
    <citation type="journal article" date="1999" name="Nature">
        <title>Sequence and analysis of chromosome 4 of the plant Arabidopsis thaliana.</title>
        <authorList>
            <person name="Mayer K.F.X."/>
            <person name="Schueller C."/>
            <person name="Wambutt R."/>
            <person name="Murphy G."/>
            <person name="Volckaert G."/>
            <person name="Pohl T."/>
            <person name="Duesterhoeft A."/>
            <person name="Stiekema W."/>
            <person name="Entian K.-D."/>
            <person name="Terryn N."/>
            <person name="Harris B."/>
            <person name="Ansorge W."/>
            <person name="Brandt P."/>
            <person name="Grivell L.A."/>
            <person name="Rieger M."/>
            <person name="Weichselgartner M."/>
            <person name="de Simone V."/>
            <person name="Obermaier B."/>
            <person name="Mache R."/>
            <person name="Mueller M."/>
            <person name="Kreis M."/>
            <person name="Delseny M."/>
            <person name="Puigdomenech P."/>
            <person name="Watson M."/>
            <person name="Schmidtheini T."/>
            <person name="Reichert B."/>
            <person name="Portetelle D."/>
            <person name="Perez-Alonso M."/>
            <person name="Boutry M."/>
            <person name="Bancroft I."/>
            <person name="Vos P."/>
            <person name="Hoheisel J."/>
            <person name="Zimmermann W."/>
            <person name="Wedler H."/>
            <person name="Ridley P."/>
            <person name="Langham S.-A."/>
            <person name="McCullagh B."/>
            <person name="Bilham L."/>
            <person name="Robben J."/>
            <person name="van der Schueren J."/>
            <person name="Grymonprez B."/>
            <person name="Chuang Y.-J."/>
            <person name="Vandenbussche F."/>
            <person name="Braeken M."/>
            <person name="Weltjens I."/>
            <person name="Voet M."/>
            <person name="Bastiaens I."/>
            <person name="Aert R."/>
            <person name="Defoor E."/>
            <person name="Weitzenegger T."/>
            <person name="Bothe G."/>
            <person name="Ramsperger U."/>
            <person name="Hilbert H."/>
            <person name="Braun M."/>
            <person name="Holzer E."/>
            <person name="Brandt A."/>
            <person name="Peters S."/>
            <person name="van Staveren M."/>
            <person name="Dirkse W."/>
            <person name="Mooijman P."/>
            <person name="Klein Lankhorst R."/>
            <person name="Rose M."/>
            <person name="Hauf J."/>
            <person name="Koetter P."/>
            <person name="Berneiser S."/>
            <person name="Hempel S."/>
            <person name="Feldpausch M."/>
            <person name="Lamberth S."/>
            <person name="Van den Daele H."/>
            <person name="De Keyser A."/>
            <person name="Buysshaert C."/>
            <person name="Gielen J."/>
            <person name="Villarroel R."/>
            <person name="De Clercq R."/>
            <person name="van Montagu M."/>
            <person name="Rogers J."/>
            <person name="Cronin A."/>
            <person name="Quail M.A."/>
            <person name="Bray-Allen S."/>
            <person name="Clark L."/>
            <person name="Doggett J."/>
            <person name="Hall S."/>
            <person name="Kay M."/>
            <person name="Lennard N."/>
            <person name="McLay K."/>
            <person name="Mayes R."/>
            <person name="Pettett A."/>
            <person name="Rajandream M.A."/>
            <person name="Lyne M."/>
            <person name="Benes V."/>
            <person name="Rechmann S."/>
            <person name="Borkova D."/>
            <person name="Bloecker H."/>
            <person name="Scharfe M."/>
            <person name="Grimm M."/>
            <person name="Loehnert T.-H."/>
            <person name="Dose S."/>
            <person name="de Haan M."/>
            <person name="Maarse A.C."/>
            <person name="Schaefer M."/>
            <person name="Mueller-Auer S."/>
            <person name="Gabel C."/>
            <person name="Fuchs M."/>
            <person name="Fartmann B."/>
            <person name="Granderath K."/>
            <person name="Dauner D."/>
            <person name="Herzl A."/>
            <person name="Neumann S."/>
            <person name="Argiriou A."/>
            <person name="Vitale D."/>
            <person name="Liguori R."/>
            <person name="Piravandi E."/>
            <person name="Massenet O."/>
            <person name="Quigley F."/>
            <person name="Clabauld G."/>
            <person name="Muendlein A."/>
            <person name="Felber R."/>
            <person name="Schnabl S."/>
            <person name="Hiller R."/>
            <person name="Schmidt W."/>
            <person name="Lecharny A."/>
            <person name="Aubourg S."/>
            <person name="Chefdor F."/>
            <person name="Cooke R."/>
            <person name="Berger C."/>
            <person name="Monfort A."/>
            <person name="Casacuberta E."/>
            <person name="Gibbons T."/>
            <person name="Weber N."/>
            <person name="Vandenbol M."/>
            <person name="Bargues M."/>
            <person name="Terol J."/>
            <person name="Torres A."/>
            <person name="Perez-Perez A."/>
            <person name="Purnelle B."/>
            <person name="Bent E."/>
            <person name="Johnson S."/>
            <person name="Tacon D."/>
            <person name="Jesse T."/>
            <person name="Heijnen L."/>
            <person name="Schwarz S."/>
            <person name="Scholler P."/>
            <person name="Heber S."/>
            <person name="Francs P."/>
            <person name="Bielke C."/>
            <person name="Frishman D."/>
            <person name="Haase D."/>
            <person name="Lemcke K."/>
            <person name="Mewes H.-W."/>
            <person name="Stocker S."/>
            <person name="Zaccaria P."/>
            <person name="Bevan M."/>
            <person name="Wilson R.K."/>
            <person name="de la Bastide M."/>
            <person name="Habermann K."/>
            <person name="Parnell L."/>
            <person name="Dedhia N."/>
            <person name="Gnoj L."/>
            <person name="Schutz K."/>
            <person name="Huang E."/>
            <person name="Spiegel L."/>
            <person name="Sekhon M."/>
            <person name="Murray J."/>
            <person name="Sheet P."/>
            <person name="Cordes M."/>
            <person name="Abu-Threideh J."/>
            <person name="Stoneking T."/>
            <person name="Kalicki J."/>
            <person name="Graves T."/>
            <person name="Harmon G."/>
            <person name="Edwards J."/>
            <person name="Latreille P."/>
            <person name="Courtney L."/>
            <person name="Cloud J."/>
            <person name="Abbott A."/>
            <person name="Scott K."/>
            <person name="Johnson D."/>
            <person name="Minx P."/>
            <person name="Bentley D."/>
            <person name="Fulton B."/>
            <person name="Miller N."/>
            <person name="Greco T."/>
            <person name="Kemp K."/>
            <person name="Kramer J."/>
            <person name="Fulton L."/>
            <person name="Mardis E."/>
            <person name="Dante M."/>
            <person name="Pepin K."/>
            <person name="Hillier L.W."/>
            <person name="Nelson J."/>
            <person name="Spieth J."/>
            <person name="Ryan E."/>
            <person name="Andrews S."/>
            <person name="Geisel C."/>
            <person name="Layman D."/>
            <person name="Du H."/>
            <person name="Ali J."/>
            <person name="Berghoff A."/>
            <person name="Jones K."/>
            <person name="Drone K."/>
            <person name="Cotton M."/>
            <person name="Joshu C."/>
            <person name="Antonoiu B."/>
            <person name="Zidanic M."/>
            <person name="Strong C."/>
            <person name="Sun H."/>
            <person name="Lamar B."/>
            <person name="Yordan C."/>
            <person name="Ma P."/>
            <person name="Zhong J."/>
            <person name="Preston R."/>
            <person name="Vil D."/>
            <person name="Shekher M."/>
            <person name="Matero A."/>
            <person name="Shah R."/>
            <person name="Swaby I.K."/>
            <person name="O'Shaughnessy A."/>
            <person name="Rodriguez M."/>
            <person name="Hoffman J."/>
            <person name="Till S."/>
            <person name="Granat S."/>
            <person name="Shohdy N."/>
            <person name="Hasegawa A."/>
            <person name="Hameed A."/>
            <person name="Lodhi M."/>
            <person name="Johnson A."/>
            <person name="Chen E."/>
            <person name="Marra M.A."/>
            <person name="Martienssen R."/>
            <person name="McCombie W.R."/>
        </authorList>
    </citation>
    <scope>NUCLEOTIDE SEQUENCE [LARGE SCALE GENOMIC DNA]</scope>
    <source>
        <strain>cv. Columbia</strain>
    </source>
</reference>
<reference key="2">
    <citation type="journal article" date="2017" name="Plant J.">
        <title>Araport11: a complete reannotation of the Arabidopsis thaliana reference genome.</title>
        <authorList>
            <person name="Cheng C.Y."/>
            <person name="Krishnakumar V."/>
            <person name="Chan A.P."/>
            <person name="Thibaud-Nissen F."/>
            <person name="Schobel S."/>
            <person name="Town C.D."/>
        </authorList>
    </citation>
    <scope>GENOME REANNOTATION</scope>
    <source>
        <strain>cv. Columbia</strain>
    </source>
</reference>
<reference key="3">
    <citation type="submission" date="2002-03" db="EMBL/GenBank/DDBJ databases">
        <title>Arabidopsis ORF clones.</title>
        <authorList>
            <person name="Kim C.J."/>
            <person name="Chen H."/>
            <person name="Quinitio C."/>
            <person name="Shinn P."/>
            <person name="Ecker J.R."/>
        </authorList>
    </citation>
    <scope>NUCLEOTIDE SEQUENCE [LARGE SCALE MRNA]</scope>
    <source>
        <strain>cv. Columbia</strain>
    </source>
</reference>
<reference key="4">
    <citation type="submission" date="2002-03" db="EMBL/GenBank/DDBJ databases">
        <title>Full-length cDNA from Arabidopsis thaliana.</title>
        <authorList>
            <person name="Brover V.V."/>
            <person name="Troukhan M.E."/>
            <person name="Alexandrov N.A."/>
            <person name="Lu Y.-P."/>
            <person name="Flavell R.B."/>
            <person name="Feldmann K.A."/>
        </authorList>
    </citation>
    <scope>NUCLEOTIDE SEQUENCE [LARGE SCALE MRNA]</scope>
</reference>
<reference key="5">
    <citation type="journal article" date="2009" name="Science">
        <title>Regulators of PP2C phosphatase activity function as abscisic acid sensors.</title>
        <authorList>
            <person name="Ma Y."/>
            <person name="Szostkiewicz I."/>
            <person name="Korte A."/>
            <person name="Moes D."/>
            <person name="Yang Y."/>
            <person name="Christmann A."/>
            <person name="Grill E."/>
        </authorList>
    </citation>
    <scope>GENE FAMILY</scope>
</reference>
<reference key="6">
    <citation type="journal article" date="2009" name="Science">
        <title>Abscisic acid inhibits type 2C protein phosphatases via the PYR/PYL family of START proteins.</title>
        <authorList>
            <person name="Park S.-Y."/>
            <person name="Fung P."/>
            <person name="Nishimura N."/>
            <person name="Jensen D.R."/>
            <person name="Fujii H."/>
            <person name="Zhao Y."/>
            <person name="Lumba S."/>
            <person name="Santiago J."/>
            <person name="Rodrigues A."/>
            <person name="Chow T.F."/>
            <person name="Alfred S.E."/>
            <person name="Bonetta D."/>
            <person name="Finkelstein R."/>
            <person name="Provart N.J."/>
            <person name="Desveaux D."/>
            <person name="Rodriguez P.L."/>
            <person name="McCourt P."/>
            <person name="Zhu J.-K."/>
            <person name="Schroeder J.I."/>
            <person name="Volkman B.F."/>
            <person name="Cutler S.R."/>
        </authorList>
    </citation>
    <scope>GENE FAMILY</scope>
    <scope>NOMENCLATURE</scope>
</reference>
<reference key="7">
    <citation type="journal article" date="2010" name="Plant J.">
        <title>PYR/PYL/RCAR family members are major in-vivo ABI1 protein phosphatase 2C-interacting proteins in Arabidopsis.</title>
        <authorList>
            <person name="Nishimura N."/>
            <person name="Sarkeshik A."/>
            <person name="Nito K."/>
            <person name="Park S.-Y."/>
            <person name="Wang A."/>
            <person name="Carvalho P.C."/>
            <person name="Lee S."/>
            <person name="Caddell D.F."/>
            <person name="Cutler S.R."/>
            <person name="Chory J."/>
            <person name="Yates J.R."/>
            <person name="Schroeder J.I."/>
        </authorList>
    </citation>
    <scope>INTERACTION WITH ABI1</scope>
    <scope>IDENTIFICATION BY MASS SPECTROMETRY</scope>
</reference>
<reference key="8">
    <citation type="journal article" date="2013" name="PLoS ONE">
        <title>Structural insights into the abscisic acid stereospecificity by the ABA receptors PYR/PYL/RCAR.</title>
        <authorList>
            <person name="Zhang X."/>
            <person name="Jiang L."/>
            <person name="Wang G."/>
            <person name="Yu L."/>
            <person name="Zhang Q."/>
            <person name="Xin Q."/>
            <person name="Wu W."/>
            <person name="Gong Z."/>
            <person name="Chen Z."/>
        </authorList>
    </citation>
    <scope>GENE FAMILY</scope>
</reference>
<dbReference type="EMBL" id="AL080237">
    <property type="protein sequence ID" value="CAB45785.1"/>
    <property type="status" value="ALT_SEQ"/>
    <property type="molecule type" value="Genomic_DNA"/>
</dbReference>
<dbReference type="EMBL" id="AL161491">
    <property type="protein sequence ID" value="CAB80911.1"/>
    <property type="status" value="ALT_SEQ"/>
    <property type="molecule type" value="Genomic_DNA"/>
</dbReference>
<dbReference type="EMBL" id="CP002687">
    <property type="protein sequence ID" value="AEE81969.1"/>
    <property type="molecule type" value="Genomic_DNA"/>
</dbReference>
<dbReference type="EMBL" id="BT025783">
    <property type="protein sequence ID" value="ABF83673.1"/>
    <property type="molecule type" value="mRNA"/>
</dbReference>
<dbReference type="EMBL" id="AY087511">
    <property type="protein sequence ID" value="AAM65054.1"/>
    <property type="status" value="ALT_INIT"/>
    <property type="molecule type" value="mRNA"/>
</dbReference>
<dbReference type="PIR" id="T10542">
    <property type="entry name" value="T10542"/>
</dbReference>
<dbReference type="RefSeq" id="NP_567208.1">
    <property type="nucleotide sequence ID" value="NM_116332.4"/>
</dbReference>
<dbReference type="SMR" id="Q1ECF1"/>
<dbReference type="BioGRID" id="13214">
    <property type="interactions" value="10"/>
</dbReference>
<dbReference type="FunCoup" id="Q1ECF1">
    <property type="interactions" value="371"/>
</dbReference>
<dbReference type="IntAct" id="Q1ECF1">
    <property type="interactions" value="10"/>
</dbReference>
<dbReference type="STRING" id="3702.Q1ECF1"/>
<dbReference type="PaxDb" id="3702-AT4G01026.1"/>
<dbReference type="ProteomicsDB" id="224810"/>
<dbReference type="DNASU" id="827923"/>
<dbReference type="EnsemblPlants" id="AT4G01026.1">
    <property type="protein sequence ID" value="AT4G01026.1"/>
    <property type="gene ID" value="AT4G01026"/>
</dbReference>
<dbReference type="GeneID" id="827923"/>
<dbReference type="Gramene" id="AT4G01026.1">
    <property type="protein sequence ID" value="AT4G01026.1"/>
    <property type="gene ID" value="AT4G01026"/>
</dbReference>
<dbReference type="KEGG" id="ath:AT4G01026"/>
<dbReference type="Araport" id="AT4G01026"/>
<dbReference type="TAIR" id="AT4G01026">
    <property type="gene designation" value="PYL7"/>
</dbReference>
<dbReference type="eggNOG" id="ENOG502QPYH">
    <property type="taxonomic scope" value="Eukaryota"/>
</dbReference>
<dbReference type="HOGENOM" id="CLU_077517_0_0_1"/>
<dbReference type="InParanoid" id="Q1ECF1"/>
<dbReference type="OMA" id="HIRAPIN"/>
<dbReference type="PhylomeDB" id="Q1ECF1"/>
<dbReference type="PRO" id="PR:Q1ECF1"/>
<dbReference type="Proteomes" id="UP000006548">
    <property type="component" value="Chromosome 4"/>
</dbReference>
<dbReference type="ExpressionAtlas" id="Q1ECF1">
    <property type="expression patterns" value="baseline and differential"/>
</dbReference>
<dbReference type="GO" id="GO:0005737">
    <property type="term" value="C:cytoplasm"/>
    <property type="evidence" value="ECO:0000250"/>
    <property type="project" value="UniProtKB"/>
</dbReference>
<dbReference type="GO" id="GO:0005634">
    <property type="term" value="C:nucleus"/>
    <property type="evidence" value="ECO:0000353"/>
    <property type="project" value="TAIR"/>
</dbReference>
<dbReference type="GO" id="GO:0005886">
    <property type="term" value="C:plasma membrane"/>
    <property type="evidence" value="ECO:0007669"/>
    <property type="project" value="UniProtKB-SubCell"/>
</dbReference>
<dbReference type="GO" id="GO:0010427">
    <property type="term" value="F:abscisic acid binding"/>
    <property type="evidence" value="ECO:0000250"/>
    <property type="project" value="UniProtKB"/>
</dbReference>
<dbReference type="GO" id="GO:0042803">
    <property type="term" value="F:protein homodimerization activity"/>
    <property type="evidence" value="ECO:0000250"/>
    <property type="project" value="UniProtKB"/>
</dbReference>
<dbReference type="GO" id="GO:0004864">
    <property type="term" value="F:protein phosphatase inhibitor activity"/>
    <property type="evidence" value="ECO:0000314"/>
    <property type="project" value="UniProtKB"/>
</dbReference>
<dbReference type="GO" id="GO:0038023">
    <property type="term" value="F:signaling receptor activity"/>
    <property type="evidence" value="ECO:0000250"/>
    <property type="project" value="UniProtKB"/>
</dbReference>
<dbReference type="GO" id="GO:0009738">
    <property type="term" value="P:abscisic acid-activated signaling pathway"/>
    <property type="evidence" value="ECO:0000250"/>
    <property type="project" value="UniProtKB"/>
</dbReference>
<dbReference type="CDD" id="cd07821">
    <property type="entry name" value="PYR_PYL_RCAR_like"/>
    <property type="match status" value="1"/>
</dbReference>
<dbReference type="FunFam" id="3.30.530.20:FF:000013">
    <property type="entry name" value="Abscisic acid receptor PYL9"/>
    <property type="match status" value="1"/>
</dbReference>
<dbReference type="Gene3D" id="3.30.530.20">
    <property type="match status" value="1"/>
</dbReference>
<dbReference type="InterPro" id="IPR050279">
    <property type="entry name" value="Plant_def-hormone_signal"/>
</dbReference>
<dbReference type="InterPro" id="IPR019587">
    <property type="entry name" value="Polyketide_cyclase/dehydratase"/>
</dbReference>
<dbReference type="InterPro" id="IPR023393">
    <property type="entry name" value="START-like_dom_sf"/>
</dbReference>
<dbReference type="PANTHER" id="PTHR31213:SF78">
    <property type="entry name" value="ABSCISIC ACID RECEPTOR PYL7"/>
    <property type="match status" value="1"/>
</dbReference>
<dbReference type="PANTHER" id="PTHR31213">
    <property type="entry name" value="OS08G0374000 PROTEIN-RELATED"/>
    <property type="match status" value="1"/>
</dbReference>
<dbReference type="Pfam" id="PF10604">
    <property type="entry name" value="Polyketide_cyc2"/>
    <property type="match status" value="1"/>
</dbReference>
<dbReference type="SUPFAM" id="SSF55961">
    <property type="entry name" value="Bet v1-like"/>
    <property type="match status" value="1"/>
</dbReference>
<evidence type="ECO:0000250" key="1">
    <source>
        <dbReference type="UniProtKB" id="O49686"/>
    </source>
</evidence>
<evidence type="ECO:0000250" key="2">
    <source>
        <dbReference type="UniProtKB" id="O80920"/>
    </source>
</evidence>
<evidence type="ECO:0000250" key="3">
    <source>
        <dbReference type="UniProtKB" id="Q84MC7"/>
    </source>
</evidence>
<evidence type="ECO:0000250" key="4">
    <source>
        <dbReference type="UniProtKB" id="Q8VZS8"/>
    </source>
</evidence>
<evidence type="ECO:0000250" key="5">
    <source>
        <dbReference type="UniProtKB" id="Q9FLB1"/>
    </source>
</evidence>
<evidence type="ECO:0000269" key="6">
    <source>
    </source>
</evidence>
<evidence type="ECO:0000305" key="7"/>